<accession>A0A7H0DN28</accession>
<sequence length="354" mass="39672">MGFCIPLRSKMLKRVSRKSSSILARRPTPKKMNIVTDSENRLKKNSYIENTNQGNILMDSIFVSTMPVETLFGSYITDDNDDYELKDLLNVTYNIKPVIVPDIKLDSVLDRDGNFRPADCFLVKLKHSDGFTKGALYLGHSAGFTATICLKNEGVSGLYIPGTSVVRSNICQGDTIVSRSSRGVQFLPQIGGEAIFLIVSLCPTKKLVETGFVIPEISSNDNAKIAARILSEKRKDIIAHINTLIQYRQQLELAYYNSCMLTEFLHYCNSYADTIKESLLKETIQKDINIIHTNITTLLNETAKVIKLVKSLVDKEDTDIVNNFITKEIKNCGGVKNRDKIVNSLSLSNLDFRL</sequence>
<organismHost>
    <name type="scientific">Cynomys gunnisoni</name>
    <name type="common">Gunnison's prairie dog</name>
    <name type="synonym">Spermophilus gunnisoni</name>
    <dbReference type="NCBI Taxonomy" id="45479"/>
</organismHost>
<organismHost>
    <name type="scientific">Cynomys leucurus</name>
    <name type="common">White-tailed prairie dog</name>
    <dbReference type="NCBI Taxonomy" id="99825"/>
</organismHost>
<organismHost>
    <name type="scientific">Cynomys ludovicianus</name>
    <name type="common">Black-tailed prairie dog</name>
    <dbReference type="NCBI Taxonomy" id="45480"/>
</organismHost>
<organismHost>
    <name type="scientific">Cynomys mexicanus</name>
    <name type="common">Mexican prairie dog</name>
    <dbReference type="NCBI Taxonomy" id="99826"/>
</organismHost>
<organismHost>
    <name type="scientific">Cynomys parvidens</name>
    <name type="common">Utah prairie dog</name>
    <dbReference type="NCBI Taxonomy" id="99827"/>
</organismHost>
<organismHost>
    <name type="scientific">Gliridae</name>
    <name type="common">dormice</name>
    <dbReference type="NCBI Taxonomy" id="30650"/>
</organismHost>
<organismHost>
    <name type="scientific">Heliosciurus ruwenzorii</name>
    <name type="common">Ruwenzori sun squirrel</name>
    <dbReference type="NCBI Taxonomy" id="226685"/>
</organismHost>
<organismHost>
    <name type="scientific">Homo sapiens</name>
    <name type="common">Human</name>
    <dbReference type="NCBI Taxonomy" id="9606"/>
</organismHost>
<organismHost>
    <name type="scientific">Mus musculus</name>
    <name type="common">Mouse</name>
    <dbReference type="NCBI Taxonomy" id="10090"/>
</organismHost>
<dbReference type="EMBL" id="MT903340">
    <property type="protein sequence ID" value="QNP12911.1"/>
    <property type="molecule type" value="Genomic_DNA"/>
</dbReference>
<dbReference type="RefSeq" id="NP_536470.1">
    <property type="nucleotide sequence ID" value="NC_003310.1"/>
</dbReference>
<dbReference type="RefSeq" id="YP_010377038.1">
    <property type="nucleotide sequence ID" value="NC_063383.1"/>
</dbReference>
<dbReference type="SMR" id="A0A7H0DN28"/>
<dbReference type="GeneID" id="72551451"/>
<dbReference type="GeneID" id="928955"/>
<dbReference type="KEGG" id="vg:928955"/>
<dbReference type="Proteomes" id="UP000516359">
    <property type="component" value="Genome"/>
</dbReference>
<dbReference type="InterPro" id="IPR007027">
    <property type="entry name" value="Poxvirus_F11"/>
</dbReference>
<dbReference type="Pfam" id="PF04943">
    <property type="entry name" value="Pox_F11"/>
    <property type="match status" value="1"/>
</dbReference>
<dbReference type="PIRSF" id="PIRSF015981">
    <property type="entry name" value="VAC_F11L"/>
    <property type="match status" value="1"/>
</dbReference>
<protein>
    <recommendedName>
        <fullName>Protein OPG055</fullName>
    </recommendedName>
    <alternativeName>
        <fullName>Protein F11</fullName>
    </alternativeName>
</protein>
<feature type="chain" id="PRO_0000457648" description="Protein OPG055">
    <location>
        <begin position="1"/>
        <end position="354"/>
    </location>
</feature>
<evidence type="ECO:0000250" key="1">
    <source>
        <dbReference type="UniProtKB" id="Q80HX7"/>
    </source>
</evidence>
<evidence type="ECO:0000305" key="2"/>
<comment type="function">
    <text evidence="1">Stimulates increases in peripheral microtubule dynamics and may increase the motility of the infected cells, contributing to cell-to-cell spread of the virus. Seems to inhibit the signaling via the GTPase RHOA and DIAPH1/mDia.</text>
</comment>
<comment type="induction">
    <text evidence="1">Expressed in the late phase of the viral replicative cycle.</text>
</comment>
<comment type="similarity">
    <text evidence="2">Belongs to the orthopoxvirus OPG055 family.</text>
</comment>
<name>PG055_MONPV</name>
<gene>
    <name type="primary">OPG055</name>
    <name type="ORF">MPXVgp043</name>
</gene>
<organism>
    <name type="scientific">Monkeypox virus</name>
    <dbReference type="NCBI Taxonomy" id="10244"/>
    <lineage>
        <taxon>Viruses</taxon>
        <taxon>Varidnaviria</taxon>
        <taxon>Bamfordvirae</taxon>
        <taxon>Nucleocytoviricota</taxon>
        <taxon>Pokkesviricetes</taxon>
        <taxon>Chitovirales</taxon>
        <taxon>Poxviridae</taxon>
        <taxon>Chordopoxvirinae</taxon>
        <taxon>Orthopoxvirus</taxon>
    </lineage>
</organism>
<proteinExistence type="inferred from homology"/>
<reference key="1">
    <citation type="journal article" date="2022" name="J. Infect. Dis.">
        <title>Exportation of Monkeypox virus from the African continent.</title>
        <authorList>
            <person name="Mauldin M.R."/>
            <person name="McCollum A.M."/>
            <person name="Nakazawa Y.J."/>
            <person name="Mandra A."/>
            <person name="Whitehouse E.R."/>
            <person name="Davidson W."/>
            <person name="Zhao H."/>
            <person name="Gao J."/>
            <person name="Li Y."/>
            <person name="Doty J."/>
            <person name="Yinka-Ogunleye A."/>
            <person name="Akinpelu A."/>
            <person name="Aruna O."/>
            <person name="Naidoo D."/>
            <person name="Lewandowski K."/>
            <person name="Afrough B."/>
            <person name="Graham V."/>
            <person name="Aarons E."/>
            <person name="Hewson R."/>
            <person name="Vipond R."/>
            <person name="Dunning J."/>
            <person name="Chand M."/>
            <person name="Brown C."/>
            <person name="Cohen-Gihon I."/>
            <person name="Erez N."/>
            <person name="Shifman O."/>
            <person name="Israeli O."/>
            <person name="Sharon M."/>
            <person name="Schwartz E."/>
            <person name="Beth-Din A."/>
            <person name="Zvi A."/>
            <person name="Mak T.M."/>
            <person name="Ng Y.K."/>
            <person name="Cui L."/>
            <person name="Lin R.T.P."/>
            <person name="Olson V.A."/>
            <person name="Brooks T."/>
            <person name="Paran N."/>
            <person name="Ihekweazu C."/>
            <person name="Reynolds M.G."/>
        </authorList>
    </citation>
    <scope>NUCLEOTIDE SEQUENCE [LARGE SCALE GENOMIC DNA]</scope>
    <source>
        <strain>MPXV-M5312_HM12_Rivers</strain>
    </source>
</reference>
<keyword id="KW-0426">Late protein</keyword>
<keyword id="KW-1185">Reference proteome</keyword>